<comment type="function">
    <text evidence="1">Part of the ecpRABCDE operon, which encodes the E.coli common pilus (ECP). ECP is found in both commensal and pathogenic strains and plays a dual role in early-stage biofilm development and host cell recognition (By similarity).</text>
</comment>
<comment type="induction">
    <text evidence="1">Negatively regulated by H-NS. Positively regulated by IHF and EcpR (By similarity).</text>
</comment>
<comment type="similarity">
    <text evidence="3">Belongs to the EcpB/EcpE family.</text>
</comment>
<evidence type="ECO:0000250" key="1"/>
<evidence type="ECO:0000255" key="2"/>
<evidence type="ECO:0000305" key="3"/>
<dbReference type="EMBL" id="CU928161">
    <property type="protein sequence ID" value="CAR01643.1"/>
    <property type="molecule type" value="Genomic_DNA"/>
</dbReference>
<dbReference type="RefSeq" id="WP_000716404.1">
    <property type="nucleotide sequence ID" value="NC_011742.1"/>
</dbReference>
<dbReference type="SMR" id="B7MCA3"/>
<dbReference type="KEGG" id="ecz:ECS88_0289"/>
<dbReference type="HOGENOM" id="CLU_106652_0_0_6"/>
<dbReference type="Proteomes" id="UP000000747">
    <property type="component" value="Chromosome"/>
</dbReference>
<dbReference type="Gene3D" id="2.60.40.10">
    <property type="entry name" value="Immunoglobulins"/>
    <property type="match status" value="1"/>
</dbReference>
<dbReference type="InterPro" id="IPR040695">
    <property type="entry name" value="EcpB_C"/>
</dbReference>
<dbReference type="InterPro" id="IPR013783">
    <property type="entry name" value="Ig-like_fold"/>
</dbReference>
<dbReference type="InterPro" id="IPR008962">
    <property type="entry name" value="PapD-like_sf"/>
</dbReference>
<dbReference type="Pfam" id="PF18649">
    <property type="entry name" value="EcpB_C"/>
    <property type="match status" value="1"/>
</dbReference>
<dbReference type="SUPFAM" id="SSF49354">
    <property type="entry name" value="PapD-like"/>
    <property type="match status" value="1"/>
</dbReference>
<sequence>MKKHLLPLALLFSGISPAQALDVGDISSFMNSDSSTLSKTIQNSTDSGRLINIRLERLSSPLDDGQVIAMDKPDELLLTPASLLLPAQASEVIRFFYKGPADEKERYYRIVWFDQALSDAQRDNANRSAVATASARIGTILVVAPRQANYHFQYANGSLTNTGNATLRILAYGPCLKAANGKECKENYYLMPGKSRRFTRVDTADNKGRVALWQGDKFIPVK</sequence>
<name>ECPB_ECO45</name>
<protein>
    <recommendedName>
        <fullName>Probable fimbrial chaperone EcpB</fullName>
    </recommendedName>
</protein>
<reference key="1">
    <citation type="journal article" date="2009" name="PLoS Genet.">
        <title>Organised genome dynamics in the Escherichia coli species results in highly diverse adaptive paths.</title>
        <authorList>
            <person name="Touchon M."/>
            <person name="Hoede C."/>
            <person name="Tenaillon O."/>
            <person name="Barbe V."/>
            <person name="Baeriswyl S."/>
            <person name="Bidet P."/>
            <person name="Bingen E."/>
            <person name="Bonacorsi S."/>
            <person name="Bouchier C."/>
            <person name="Bouvet O."/>
            <person name="Calteau A."/>
            <person name="Chiapello H."/>
            <person name="Clermont O."/>
            <person name="Cruveiller S."/>
            <person name="Danchin A."/>
            <person name="Diard M."/>
            <person name="Dossat C."/>
            <person name="Karoui M.E."/>
            <person name="Frapy E."/>
            <person name="Garry L."/>
            <person name="Ghigo J.M."/>
            <person name="Gilles A.M."/>
            <person name="Johnson J."/>
            <person name="Le Bouguenec C."/>
            <person name="Lescat M."/>
            <person name="Mangenot S."/>
            <person name="Martinez-Jehanne V."/>
            <person name="Matic I."/>
            <person name="Nassif X."/>
            <person name="Oztas S."/>
            <person name="Petit M.A."/>
            <person name="Pichon C."/>
            <person name="Rouy Z."/>
            <person name="Ruf C.S."/>
            <person name="Schneider D."/>
            <person name="Tourret J."/>
            <person name="Vacherie B."/>
            <person name="Vallenet D."/>
            <person name="Medigue C."/>
            <person name="Rocha E.P.C."/>
            <person name="Denamur E."/>
        </authorList>
    </citation>
    <scope>NUCLEOTIDE SEQUENCE [LARGE SCALE GENOMIC DNA]</scope>
    <source>
        <strain>S88 / ExPEC</strain>
    </source>
</reference>
<feature type="signal peptide" evidence="2">
    <location>
        <begin position="1"/>
        <end position="20"/>
    </location>
</feature>
<feature type="chain" id="PRO_0000369164" description="Probable fimbrial chaperone EcpB">
    <location>
        <begin position="21"/>
        <end position="222"/>
    </location>
</feature>
<keyword id="KW-0143">Chaperone</keyword>
<keyword id="KW-1029">Fimbrium biogenesis</keyword>
<keyword id="KW-1185">Reference proteome</keyword>
<keyword id="KW-0732">Signal</keyword>
<accession>B7MCA3</accession>
<organism>
    <name type="scientific">Escherichia coli O45:K1 (strain S88 / ExPEC)</name>
    <dbReference type="NCBI Taxonomy" id="585035"/>
    <lineage>
        <taxon>Bacteria</taxon>
        <taxon>Pseudomonadati</taxon>
        <taxon>Pseudomonadota</taxon>
        <taxon>Gammaproteobacteria</taxon>
        <taxon>Enterobacterales</taxon>
        <taxon>Enterobacteriaceae</taxon>
        <taxon>Escherichia</taxon>
    </lineage>
</organism>
<gene>
    <name type="primary">ecpB</name>
    <name type="synonym">matC</name>
    <name type="ordered locus">ECS88_0289</name>
</gene>
<proteinExistence type="inferred from homology"/>